<feature type="chain" id="PRO_0000111338" description="Small ribosomal subunit protein uS9">
    <location>
        <begin position="1"/>
        <end position="129"/>
    </location>
</feature>
<feature type="region of interest" description="Disordered" evidence="2">
    <location>
        <begin position="107"/>
        <end position="129"/>
    </location>
</feature>
<feature type="compositionally biased region" description="Basic residues" evidence="2">
    <location>
        <begin position="114"/>
        <end position="129"/>
    </location>
</feature>
<dbReference type="EMBL" id="AL111168">
    <property type="protein sequence ID" value="CAL35586.1"/>
    <property type="molecule type" value="Genomic_DNA"/>
</dbReference>
<dbReference type="PIR" id="D81294">
    <property type="entry name" value="D81294"/>
</dbReference>
<dbReference type="RefSeq" id="WP_002851459.1">
    <property type="nucleotide sequence ID" value="NZ_SZUC01000003.1"/>
</dbReference>
<dbReference type="RefSeq" id="YP_002344859.1">
    <property type="nucleotide sequence ID" value="NC_002163.1"/>
</dbReference>
<dbReference type="SMR" id="Q9PMI3"/>
<dbReference type="IntAct" id="Q9PMI3">
    <property type="interactions" value="2"/>
</dbReference>
<dbReference type="STRING" id="192222.Cj1479c"/>
<dbReference type="PaxDb" id="192222-Cj1479c"/>
<dbReference type="EnsemblBacteria" id="CAL35586">
    <property type="protein sequence ID" value="CAL35586"/>
    <property type="gene ID" value="Cj1479c"/>
</dbReference>
<dbReference type="GeneID" id="905766"/>
<dbReference type="KEGG" id="cje:Cj1479c"/>
<dbReference type="PATRIC" id="fig|192222.6.peg.1459"/>
<dbReference type="eggNOG" id="COG0103">
    <property type="taxonomic scope" value="Bacteria"/>
</dbReference>
<dbReference type="HOGENOM" id="CLU_046483_2_1_7"/>
<dbReference type="OrthoDB" id="9803965at2"/>
<dbReference type="Proteomes" id="UP000000799">
    <property type="component" value="Chromosome"/>
</dbReference>
<dbReference type="GO" id="GO:0022627">
    <property type="term" value="C:cytosolic small ribosomal subunit"/>
    <property type="evidence" value="ECO:0007669"/>
    <property type="project" value="TreeGrafter"/>
</dbReference>
<dbReference type="GO" id="GO:0003723">
    <property type="term" value="F:RNA binding"/>
    <property type="evidence" value="ECO:0007669"/>
    <property type="project" value="TreeGrafter"/>
</dbReference>
<dbReference type="GO" id="GO:0003735">
    <property type="term" value="F:structural constituent of ribosome"/>
    <property type="evidence" value="ECO:0007669"/>
    <property type="project" value="InterPro"/>
</dbReference>
<dbReference type="GO" id="GO:0006412">
    <property type="term" value="P:translation"/>
    <property type="evidence" value="ECO:0007669"/>
    <property type="project" value="UniProtKB-UniRule"/>
</dbReference>
<dbReference type="FunFam" id="3.30.230.10:FF:000025">
    <property type="entry name" value="30S ribosomal protein S9"/>
    <property type="match status" value="1"/>
</dbReference>
<dbReference type="Gene3D" id="3.30.230.10">
    <property type="match status" value="1"/>
</dbReference>
<dbReference type="HAMAP" id="MF_00532_B">
    <property type="entry name" value="Ribosomal_uS9_B"/>
    <property type="match status" value="1"/>
</dbReference>
<dbReference type="InterPro" id="IPR020568">
    <property type="entry name" value="Ribosomal_Su5_D2-typ_SF"/>
</dbReference>
<dbReference type="InterPro" id="IPR000754">
    <property type="entry name" value="Ribosomal_uS9"/>
</dbReference>
<dbReference type="InterPro" id="IPR023035">
    <property type="entry name" value="Ribosomal_uS9_bac/plastid"/>
</dbReference>
<dbReference type="InterPro" id="IPR020574">
    <property type="entry name" value="Ribosomal_uS9_CS"/>
</dbReference>
<dbReference type="InterPro" id="IPR014721">
    <property type="entry name" value="Ribsml_uS5_D2-typ_fold_subgr"/>
</dbReference>
<dbReference type="NCBIfam" id="NF001099">
    <property type="entry name" value="PRK00132.1"/>
    <property type="match status" value="1"/>
</dbReference>
<dbReference type="PANTHER" id="PTHR21569">
    <property type="entry name" value="RIBOSOMAL PROTEIN S9"/>
    <property type="match status" value="1"/>
</dbReference>
<dbReference type="PANTHER" id="PTHR21569:SF1">
    <property type="entry name" value="SMALL RIBOSOMAL SUBUNIT PROTEIN US9M"/>
    <property type="match status" value="1"/>
</dbReference>
<dbReference type="Pfam" id="PF00380">
    <property type="entry name" value="Ribosomal_S9"/>
    <property type="match status" value="1"/>
</dbReference>
<dbReference type="SUPFAM" id="SSF54211">
    <property type="entry name" value="Ribosomal protein S5 domain 2-like"/>
    <property type="match status" value="1"/>
</dbReference>
<dbReference type="PROSITE" id="PS00360">
    <property type="entry name" value="RIBOSOMAL_S9"/>
    <property type="match status" value="1"/>
</dbReference>
<organism>
    <name type="scientific">Campylobacter jejuni subsp. jejuni serotype O:2 (strain ATCC 700819 / NCTC 11168)</name>
    <dbReference type="NCBI Taxonomy" id="192222"/>
    <lineage>
        <taxon>Bacteria</taxon>
        <taxon>Pseudomonadati</taxon>
        <taxon>Campylobacterota</taxon>
        <taxon>Epsilonproteobacteria</taxon>
        <taxon>Campylobacterales</taxon>
        <taxon>Campylobacteraceae</taxon>
        <taxon>Campylobacter</taxon>
    </lineage>
</organism>
<accession>Q9PMI3</accession>
<accession>Q0P8D8</accession>
<comment type="similarity">
    <text evidence="1">Belongs to the universal ribosomal protein uS9 family.</text>
</comment>
<reference key="1">
    <citation type="journal article" date="2000" name="Nature">
        <title>The genome sequence of the food-borne pathogen Campylobacter jejuni reveals hypervariable sequences.</title>
        <authorList>
            <person name="Parkhill J."/>
            <person name="Wren B.W."/>
            <person name="Mungall K.L."/>
            <person name="Ketley J.M."/>
            <person name="Churcher C.M."/>
            <person name="Basham D."/>
            <person name="Chillingworth T."/>
            <person name="Davies R.M."/>
            <person name="Feltwell T."/>
            <person name="Holroyd S."/>
            <person name="Jagels K."/>
            <person name="Karlyshev A.V."/>
            <person name="Moule S."/>
            <person name="Pallen M.J."/>
            <person name="Penn C.W."/>
            <person name="Quail M.A."/>
            <person name="Rajandream M.A."/>
            <person name="Rutherford K.M."/>
            <person name="van Vliet A.H.M."/>
            <person name="Whitehead S."/>
            <person name="Barrell B.G."/>
        </authorList>
    </citation>
    <scope>NUCLEOTIDE SEQUENCE [LARGE SCALE GENOMIC DNA]</scope>
    <source>
        <strain>ATCC 700819 / NCTC 11168</strain>
    </source>
</reference>
<sequence length="129" mass="14137">MATTYATGKRKTAIAKVWVKPGSGKISVNGVDLNTWLGGHEAIKLKVVQPLLVTKQETSMDIKATTLGGGYSAQAEALRHGISRALAAMDADFRALLKPKGLLTRDSRTVERKKYGRRKARRSPQFSKR</sequence>
<keyword id="KW-1185">Reference proteome</keyword>
<keyword id="KW-0687">Ribonucleoprotein</keyword>
<keyword id="KW-0689">Ribosomal protein</keyword>
<name>RS9_CAMJE</name>
<evidence type="ECO:0000255" key="1">
    <source>
        <dbReference type="HAMAP-Rule" id="MF_00532"/>
    </source>
</evidence>
<evidence type="ECO:0000256" key="2">
    <source>
        <dbReference type="SAM" id="MobiDB-lite"/>
    </source>
</evidence>
<evidence type="ECO:0000305" key="3"/>
<protein>
    <recommendedName>
        <fullName evidence="1">Small ribosomal subunit protein uS9</fullName>
    </recommendedName>
    <alternativeName>
        <fullName evidence="3">30S ribosomal protein S9</fullName>
    </alternativeName>
</protein>
<proteinExistence type="inferred from homology"/>
<gene>
    <name evidence="1" type="primary">rpsI</name>
    <name type="ordered locus">Cj1479c</name>
</gene>